<protein>
    <recommendedName>
        <fullName evidence="1">Ubiquinone/menaquinone biosynthesis C-methyltransferase UbiE</fullName>
        <ecNumber evidence="1">2.1.1.163</ecNumber>
        <ecNumber evidence="1">2.1.1.201</ecNumber>
    </recommendedName>
    <alternativeName>
        <fullName evidence="1">2-methoxy-6-polyprenyl-1,4-benzoquinol methylase</fullName>
    </alternativeName>
    <alternativeName>
        <fullName evidence="1">Demethylmenaquinone methyltransferase</fullName>
    </alternativeName>
</protein>
<dbReference type="EC" id="2.1.1.163" evidence="1"/>
<dbReference type="EC" id="2.1.1.201" evidence="1"/>
<dbReference type="EMBL" id="AM236080">
    <property type="protein sequence ID" value="CAK05862.1"/>
    <property type="molecule type" value="Genomic_DNA"/>
</dbReference>
<dbReference type="RefSeq" id="WP_011650173.1">
    <property type="nucleotide sequence ID" value="NC_008380.1"/>
</dbReference>
<dbReference type="SMR" id="Q1MME0"/>
<dbReference type="EnsemblBacteria" id="CAK05862">
    <property type="protein sequence ID" value="CAK05862"/>
    <property type="gene ID" value="RL0371"/>
</dbReference>
<dbReference type="GeneID" id="84667935"/>
<dbReference type="KEGG" id="rle:RL0371"/>
<dbReference type="eggNOG" id="COG2226">
    <property type="taxonomic scope" value="Bacteria"/>
</dbReference>
<dbReference type="HOGENOM" id="CLU_037990_0_0_5"/>
<dbReference type="UniPathway" id="UPA00079">
    <property type="reaction ID" value="UER00169"/>
</dbReference>
<dbReference type="UniPathway" id="UPA00232"/>
<dbReference type="Proteomes" id="UP000006575">
    <property type="component" value="Chromosome"/>
</dbReference>
<dbReference type="GO" id="GO:0008425">
    <property type="term" value="F:2-methoxy-6-polyprenyl-1,4-benzoquinol methyltransferase activity"/>
    <property type="evidence" value="ECO:0007669"/>
    <property type="project" value="UniProtKB-UniRule"/>
</dbReference>
<dbReference type="GO" id="GO:0043770">
    <property type="term" value="F:demethylmenaquinone methyltransferase activity"/>
    <property type="evidence" value="ECO:0007669"/>
    <property type="project" value="UniProtKB-UniRule"/>
</dbReference>
<dbReference type="GO" id="GO:0009060">
    <property type="term" value="P:aerobic respiration"/>
    <property type="evidence" value="ECO:0007669"/>
    <property type="project" value="UniProtKB-UniRule"/>
</dbReference>
<dbReference type="GO" id="GO:0009234">
    <property type="term" value="P:menaquinone biosynthetic process"/>
    <property type="evidence" value="ECO:0007669"/>
    <property type="project" value="UniProtKB-UniRule"/>
</dbReference>
<dbReference type="GO" id="GO:0032259">
    <property type="term" value="P:methylation"/>
    <property type="evidence" value="ECO:0007669"/>
    <property type="project" value="UniProtKB-KW"/>
</dbReference>
<dbReference type="CDD" id="cd02440">
    <property type="entry name" value="AdoMet_MTases"/>
    <property type="match status" value="1"/>
</dbReference>
<dbReference type="FunFam" id="3.40.50.150:FF:000064">
    <property type="entry name" value="2-methoxy-6-polyprenyl-1,4-benzoquinol methylase, mitochondrial"/>
    <property type="match status" value="1"/>
</dbReference>
<dbReference type="Gene3D" id="3.40.50.150">
    <property type="entry name" value="Vaccinia Virus protein VP39"/>
    <property type="match status" value="1"/>
</dbReference>
<dbReference type="HAMAP" id="MF_01813">
    <property type="entry name" value="MenG_UbiE_methyltr"/>
    <property type="match status" value="1"/>
</dbReference>
<dbReference type="InterPro" id="IPR029063">
    <property type="entry name" value="SAM-dependent_MTases_sf"/>
</dbReference>
<dbReference type="InterPro" id="IPR004033">
    <property type="entry name" value="UbiE/COQ5_MeTrFase"/>
</dbReference>
<dbReference type="InterPro" id="IPR023576">
    <property type="entry name" value="UbiE/COQ5_MeTrFase_CS"/>
</dbReference>
<dbReference type="NCBIfam" id="TIGR01934">
    <property type="entry name" value="MenG_MenH_UbiE"/>
    <property type="match status" value="1"/>
</dbReference>
<dbReference type="NCBIfam" id="NF001242">
    <property type="entry name" value="PRK00216.1-3"/>
    <property type="match status" value="1"/>
</dbReference>
<dbReference type="NCBIfam" id="NF001244">
    <property type="entry name" value="PRK00216.1-5"/>
    <property type="match status" value="1"/>
</dbReference>
<dbReference type="PANTHER" id="PTHR43591:SF24">
    <property type="entry name" value="2-METHOXY-6-POLYPRENYL-1,4-BENZOQUINOL METHYLASE, MITOCHONDRIAL"/>
    <property type="match status" value="1"/>
</dbReference>
<dbReference type="PANTHER" id="PTHR43591">
    <property type="entry name" value="METHYLTRANSFERASE"/>
    <property type="match status" value="1"/>
</dbReference>
<dbReference type="Pfam" id="PF01209">
    <property type="entry name" value="Ubie_methyltran"/>
    <property type="match status" value="1"/>
</dbReference>
<dbReference type="SUPFAM" id="SSF53335">
    <property type="entry name" value="S-adenosyl-L-methionine-dependent methyltransferases"/>
    <property type="match status" value="1"/>
</dbReference>
<dbReference type="PROSITE" id="PS51608">
    <property type="entry name" value="SAM_MT_UBIE"/>
    <property type="match status" value="1"/>
</dbReference>
<dbReference type="PROSITE" id="PS01183">
    <property type="entry name" value="UBIE_1"/>
    <property type="match status" value="1"/>
</dbReference>
<dbReference type="PROSITE" id="PS01184">
    <property type="entry name" value="UBIE_2"/>
    <property type="match status" value="1"/>
</dbReference>
<accession>Q1MME0</accession>
<sequence>MSESRTSADGGMETSYGFREVPDGQKQGLVNQVFHKVAKRYDIMNDVMSMGMHRAWKDAMISALNPRKEPGYKVLDVAGGTGDIAFRIVEASGRQAHATVLDINGSMLGVGAERAEKKKLSGNLTFVEANAEELPFEAGSFDAYTIAFGIRNVPRIDAALSEAYRVLKRGGRLLVLEFSEVDMPLLDKIYDAWSFNAIPQFGKAITGDAEPYQYLVESIRKFPNQENFAAMIRQAGFSRVTFTNYTGGIAALHSGWKL</sequence>
<name>UBIE_RHIJ3</name>
<feature type="chain" id="PRO_1000088291" description="Ubiquinone/menaquinone biosynthesis C-methyltransferase UbiE">
    <location>
        <begin position="1"/>
        <end position="258"/>
    </location>
</feature>
<feature type="region of interest" description="Disordered" evidence="2">
    <location>
        <begin position="1"/>
        <end position="21"/>
    </location>
</feature>
<feature type="binding site" evidence="1">
    <location>
        <position position="81"/>
    </location>
    <ligand>
        <name>S-adenosyl-L-methionine</name>
        <dbReference type="ChEBI" id="CHEBI:59789"/>
    </ligand>
</feature>
<feature type="binding site" evidence="1">
    <location>
        <position position="102"/>
    </location>
    <ligand>
        <name>S-adenosyl-L-methionine</name>
        <dbReference type="ChEBI" id="CHEBI:59789"/>
    </ligand>
</feature>
<feature type="binding site" evidence="1">
    <location>
        <begin position="130"/>
        <end position="131"/>
    </location>
    <ligand>
        <name>S-adenosyl-L-methionine</name>
        <dbReference type="ChEBI" id="CHEBI:59789"/>
    </ligand>
</feature>
<gene>
    <name evidence="1" type="primary">ubiE</name>
    <name type="ordered locus">RL0371</name>
</gene>
<proteinExistence type="inferred from homology"/>
<evidence type="ECO:0000255" key="1">
    <source>
        <dbReference type="HAMAP-Rule" id="MF_01813"/>
    </source>
</evidence>
<evidence type="ECO:0000256" key="2">
    <source>
        <dbReference type="SAM" id="MobiDB-lite"/>
    </source>
</evidence>
<keyword id="KW-0474">Menaquinone biosynthesis</keyword>
<keyword id="KW-0489">Methyltransferase</keyword>
<keyword id="KW-0949">S-adenosyl-L-methionine</keyword>
<keyword id="KW-0808">Transferase</keyword>
<keyword id="KW-0831">Ubiquinone biosynthesis</keyword>
<reference key="1">
    <citation type="journal article" date="2006" name="Genome Biol.">
        <title>The genome of Rhizobium leguminosarum has recognizable core and accessory components.</title>
        <authorList>
            <person name="Young J.P.W."/>
            <person name="Crossman L.C."/>
            <person name="Johnston A.W.B."/>
            <person name="Thomson N.R."/>
            <person name="Ghazoui Z.F."/>
            <person name="Hull K.H."/>
            <person name="Wexler M."/>
            <person name="Curson A.R.J."/>
            <person name="Todd J.D."/>
            <person name="Poole P.S."/>
            <person name="Mauchline T.H."/>
            <person name="East A.K."/>
            <person name="Quail M.A."/>
            <person name="Churcher C."/>
            <person name="Arrowsmith C."/>
            <person name="Cherevach I."/>
            <person name="Chillingworth T."/>
            <person name="Clarke K."/>
            <person name="Cronin A."/>
            <person name="Davis P."/>
            <person name="Fraser A."/>
            <person name="Hance Z."/>
            <person name="Hauser H."/>
            <person name="Jagels K."/>
            <person name="Moule S."/>
            <person name="Mungall K."/>
            <person name="Norbertczak H."/>
            <person name="Rabbinowitsch E."/>
            <person name="Sanders M."/>
            <person name="Simmonds M."/>
            <person name="Whitehead S."/>
            <person name="Parkhill J."/>
        </authorList>
    </citation>
    <scope>NUCLEOTIDE SEQUENCE [LARGE SCALE GENOMIC DNA]</scope>
    <source>
        <strain>DSM 114642 / LMG 32736 / 3841</strain>
    </source>
</reference>
<comment type="function">
    <text evidence="1">Methyltransferase required for the conversion of demethylmenaquinol (DMKH2) to menaquinol (MKH2) and the conversion of 2-polyprenyl-6-methoxy-1,4-benzoquinol (DDMQH2) to 2-polyprenyl-3-methyl-6-methoxy-1,4-benzoquinol (DMQH2).</text>
</comment>
<comment type="catalytic activity">
    <reaction evidence="1">
        <text>a 2-demethylmenaquinol + S-adenosyl-L-methionine = a menaquinol + S-adenosyl-L-homocysteine + H(+)</text>
        <dbReference type="Rhea" id="RHEA:42640"/>
        <dbReference type="Rhea" id="RHEA-COMP:9539"/>
        <dbReference type="Rhea" id="RHEA-COMP:9563"/>
        <dbReference type="ChEBI" id="CHEBI:15378"/>
        <dbReference type="ChEBI" id="CHEBI:18151"/>
        <dbReference type="ChEBI" id="CHEBI:55437"/>
        <dbReference type="ChEBI" id="CHEBI:57856"/>
        <dbReference type="ChEBI" id="CHEBI:59789"/>
        <dbReference type="EC" id="2.1.1.163"/>
    </reaction>
</comment>
<comment type="catalytic activity">
    <reaction evidence="1">
        <text>a 2-methoxy-6-(all-trans-polyprenyl)benzene-1,4-diol + S-adenosyl-L-methionine = a 5-methoxy-2-methyl-3-(all-trans-polyprenyl)benzene-1,4-diol + S-adenosyl-L-homocysteine + H(+)</text>
        <dbReference type="Rhea" id="RHEA:28286"/>
        <dbReference type="Rhea" id="RHEA-COMP:10858"/>
        <dbReference type="Rhea" id="RHEA-COMP:10859"/>
        <dbReference type="ChEBI" id="CHEBI:15378"/>
        <dbReference type="ChEBI" id="CHEBI:57856"/>
        <dbReference type="ChEBI" id="CHEBI:59789"/>
        <dbReference type="ChEBI" id="CHEBI:84166"/>
        <dbReference type="ChEBI" id="CHEBI:84167"/>
        <dbReference type="EC" id="2.1.1.201"/>
    </reaction>
</comment>
<comment type="pathway">
    <text evidence="1">Quinol/quinone metabolism; menaquinone biosynthesis; menaquinol from 1,4-dihydroxy-2-naphthoate: step 2/2.</text>
</comment>
<comment type="pathway">
    <text evidence="1">Cofactor biosynthesis; ubiquinone biosynthesis.</text>
</comment>
<comment type="similarity">
    <text evidence="1">Belongs to the class I-like SAM-binding methyltransferase superfamily. MenG/UbiE family.</text>
</comment>
<organism>
    <name type="scientific">Rhizobium johnstonii (strain DSM 114642 / LMG 32736 / 3841)</name>
    <name type="common">Rhizobium leguminosarum bv. viciae</name>
    <dbReference type="NCBI Taxonomy" id="216596"/>
    <lineage>
        <taxon>Bacteria</taxon>
        <taxon>Pseudomonadati</taxon>
        <taxon>Pseudomonadota</taxon>
        <taxon>Alphaproteobacteria</taxon>
        <taxon>Hyphomicrobiales</taxon>
        <taxon>Rhizobiaceae</taxon>
        <taxon>Rhizobium/Agrobacterium group</taxon>
        <taxon>Rhizobium</taxon>
        <taxon>Rhizobium johnstonii</taxon>
    </lineage>
</organism>